<gene>
    <name type="primary">fnbA</name>
    <name type="ordered locus">SAB2375c</name>
</gene>
<dbReference type="EMBL" id="AJ938182">
    <property type="protein sequence ID" value="CAI82063.1"/>
    <property type="molecule type" value="Genomic_DNA"/>
</dbReference>
<dbReference type="RefSeq" id="WP_000794654.1">
    <property type="nucleotide sequence ID" value="NC_007622.1"/>
</dbReference>
<dbReference type="SMR" id="Q2YW62"/>
<dbReference type="KEGG" id="sab:SAB2375c"/>
<dbReference type="HOGENOM" id="CLU_009849_1_0_9"/>
<dbReference type="GO" id="GO:0005576">
    <property type="term" value="C:extracellular region"/>
    <property type="evidence" value="ECO:0007669"/>
    <property type="project" value="UniProtKB-KW"/>
</dbReference>
<dbReference type="GO" id="GO:0007155">
    <property type="term" value="P:cell adhesion"/>
    <property type="evidence" value="ECO:0007669"/>
    <property type="project" value="UniProtKB-KW"/>
</dbReference>
<dbReference type="Gene3D" id="2.60.40.1280">
    <property type="match status" value="1"/>
</dbReference>
<dbReference type="Gene3D" id="2.60.40.1290">
    <property type="match status" value="1"/>
</dbReference>
<dbReference type="InterPro" id="IPR011266">
    <property type="entry name" value="Adhesin_Fg-bd_dom_2"/>
</dbReference>
<dbReference type="InterPro" id="IPR008966">
    <property type="entry name" value="Adhesion_dom_sf"/>
</dbReference>
<dbReference type="InterPro" id="IPR011252">
    <property type="entry name" value="Fibrogen-bd_dom1"/>
</dbReference>
<dbReference type="InterPro" id="IPR004237">
    <property type="entry name" value="Fibron_repeat-bd"/>
</dbReference>
<dbReference type="InterPro" id="IPR019931">
    <property type="entry name" value="LPXTG_anchor"/>
</dbReference>
<dbReference type="InterPro" id="IPR041171">
    <property type="entry name" value="SDR_Ig"/>
</dbReference>
<dbReference type="InterPro" id="IPR005877">
    <property type="entry name" value="YSIRK_signal_dom"/>
</dbReference>
<dbReference type="NCBIfam" id="TIGR01167">
    <property type="entry name" value="LPXTG_anchor"/>
    <property type="match status" value="1"/>
</dbReference>
<dbReference type="Pfam" id="PF17961">
    <property type="entry name" value="Big_8"/>
    <property type="match status" value="1"/>
</dbReference>
<dbReference type="Pfam" id="PF02986">
    <property type="entry name" value="Fn_bind"/>
    <property type="match status" value="3"/>
</dbReference>
<dbReference type="Pfam" id="PF00746">
    <property type="entry name" value="Gram_pos_anchor"/>
    <property type="match status" value="1"/>
</dbReference>
<dbReference type="Pfam" id="PF10425">
    <property type="entry name" value="SdrG_C_C"/>
    <property type="match status" value="1"/>
</dbReference>
<dbReference type="Pfam" id="PF04650">
    <property type="entry name" value="YSIRK_signal"/>
    <property type="match status" value="1"/>
</dbReference>
<dbReference type="SUPFAM" id="SSF49401">
    <property type="entry name" value="Bacterial adhesins"/>
    <property type="match status" value="2"/>
</dbReference>
<dbReference type="PROSITE" id="PS50847">
    <property type="entry name" value="GRAM_POS_ANCHORING"/>
    <property type="match status" value="1"/>
</dbReference>
<protein>
    <recommendedName>
        <fullName>Fibronectin-binding protein A</fullName>
    </recommendedName>
</protein>
<evidence type="ECO:0000250" key="1"/>
<evidence type="ECO:0000250" key="2">
    <source>
        <dbReference type="UniProtKB" id="P14738"/>
    </source>
</evidence>
<evidence type="ECO:0000255" key="3"/>
<evidence type="ECO:0000255" key="4">
    <source>
        <dbReference type="PROSITE-ProRule" id="PRU00477"/>
    </source>
</evidence>
<evidence type="ECO:0000256" key="5">
    <source>
        <dbReference type="SAM" id="MobiDB-lite"/>
    </source>
</evidence>
<accession>Q2YW62</accession>
<proteinExistence type="inferred from homology"/>
<reference key="1">
    <citation type="journal article" date="2007" name="PLoS ONE">
        <title>Molecular correlates of host specialization in Staphylococcus aureus.</title>
        <authorList>
            <person name="Herron-Olson L."/>
            <person name="Fitzgerald J.R."/>
            <person name="Musser J.M."/>
            <person name="Kapur V."/>
        </authorList>
    </citation>
    <scope>NUCLEOTIDE SEQUENCE [LARGE SCALE GENOMIC DNA]</scope>
    <source>
        <strain>bovine RF122 / ET3-1</strain>
    </source>
</reference>
<name>FNBA_STAAB</name>
<feature type="signal peptide" evidence="3">
    <location>
        <begin position="1"/>
        <end position="35"/>
    </location>
</feature>
<feature type="chain" id="PRO_0000313876" description="Fibronectin-binding protein A">
    <location>
        <begin position="36"/>
        <end position="957"/>
    </location>
</feature>
<feature type="propeptide" id="PRO_0000313877" description="Removed by sortase" evidence="4">
    <location>
        <begin position="958"/>
        <end position="990"/>
    </location>
</feature>
<feature type="repeat" description="B-1">
    <location>
        <begin position="545"/>
        <end position="574"/>
    </location>
</feature>
<feature type="repeat" description="B-2">
    <location>
        <begin position="575"/>
        <end position="604"/>
    </location>
</feature>
<feature type="repeat" description="D-1">
    <location>
        <begin position="707"/>
        <end position="744"/>
    </location>
</feature>
<feature type="repeat" description="D-2">
    <location>
        <begin position="745"/>
        <end position="782"/>
    </location>
</feature>
<feature type="repeat" description="D-3">
    <location>
        <begin position="783"/>
        <end position="821"/>
    </location>
</feature>
<feature type="repeat" description="D-4; truncated">
    <location>
        <begin position="822"/>
        <end position="850"/>
    </location>
</feature>
<feature type="repeat" description="WR 1">
    <location>
        <begin position="851"/>
        <end position="864"/>
    </location>
</feature>
<feature type="repeat" description="WR 2">
    <location>
        <begin position="865"/>
        <end position="878"/>
    </location>
</feature>
<feature type="repeat" description="WR 3">
    <location>
        <begin position="879"/>
        <end position="892"/>
    </location>
</feature>
<feature type="repeat" description="WR 4">
    <location>
        <begin position="893"/>
        <end position="906"/>
    </location>
</feature>
<feature type="repeat" description="WR 5">
    <location>
        <begin position="907"/>
        <end position="920"/>
    </location>
</feature>
<feature type="region of interest" description="Disordered" evidence="5">
    <location>
        <begin position="33"/>
        <end position="61"/>
    </location>
</feature>
<feature type="region of interest" description="Ligand-binding A region">
    <location>
        <begin position="37"/>
        <end position="511"/>
    </location>
</feature>
<feature type="region of interest" description="Disordered" evidence="5">
    <location>
        <begin position="96"/>
        <end position="193"/>
    </location>
</feature>
<feature type="region of interest" description="Fibrinogen/elastin/tropoelastin-binding" evidence="1">
    <location>
        <begin position="194"/>
        <end position="511"/>
    </location>
</feature>
<feature type="region of interest" description="Fibronectin-binding" evidence="1">
    <location>
        <begin position="512"/>
        <end position="834"/>
    </location>
</feature>
<feature type="region of interest" description="2 X approximate tandem repeats">
    <location>
        <begin position="545"/>
        <end position="604"/>
    </location>
</feature>
<feature type="region of interest" description="Disordered" evidence="5">
    <location>
        <begin position="702"/>
        <end position="969"/>
    </location>
</feature>
<feature type="region of interest" description="4 X approximate tandem repeats">
    <location>
        <begin position="707"/>
        <end position="850"/>
    </location>
</feature>
<feature type="region of interest" description="5 X tandem repeats, Pro-rich (WR)">
    <location>
        <begin position="851"/>
        <end position="920"/>
    </location>
</feature>
<feature type="short sequence motif" description="YSIRK-G/S signaling motif" evidence="2">
    <location>
        <begin position="7"/>
        <end position="18"/>
    </location>
</feature>
<feature type="short sequence motif" description="LPXTG sorting signal" evidence="4">
    <location>
        <begin position="954"/>
        <end position="958"/>
    </location>
</feature>
<feature type="compositionally biased region" description="Polar residues" evidence="5">
    <location>
        <begin position="37"/>
        <end position="55"/>
    </location>
</feature>
<feature type="compositionally biased region" description="Basic and acidic residues" evidence="5">
    <location>
        <begin position="112"/>
        <end position="126"/>
    </location>
</feature>
<feature type="compositionally biased region" description="Basic and acidic residues" evidence="5">
    <location>
        <begin position="179"/>
        <end position="193"/>
    </location>
</feature>
<feature type="compositionally biased region" description="Polar residues" evidence="5">
    <location>
        <begin position="741"/>
        <end position="752"/>
    </location>
</feature>
<feature type="compositionally biased region" description="Basic and acidic residues" evidence="5">
    <location>
        <begin position="786"/>
        <end position="800"/>
    </location>
</feature>
<feature type="compositionally biased region" description="Pro residues" evidence="5">
    <location>
        <begin position="836"/>
        <end position="910"/>
    </location>
</feature>
<feature type="modified residue" description="Pentaglycyl murein peptidoglycan amidated threonine" evidence="4">
    <location>
        <position position="957"/>
    </location>
</feature>
<sequence length="990" mass="108925">MKNNLRYGIRKHKLGAASVFLGTMIVVGMGQDKEAATSEQKTTTVEENGNSATDNKVSETQTTTTNVNTIDETQSYSATATEQPSNATQVITEEAPKAVQAPQTAQPANLETVKEEVVKEEEKPQVKETTQSQDNSGDQRQVDLTPKKATQNQAAETQVEVAQPRTVSESKPRVTRSADVAEAKEASDVTEVKGTDVTSKVTVTESSIEGHNNTNKVEPHAGQRAVLKYKLKFEDGLHQGDYFDFTLSNNVNTHGVSTARKVPEIKNGSVVMATGKILEDGKIRYTFTNDVEHKVEVTANLEINLFIDPKTFQSNGEEKVTSSLNGSKTEKNLQIEYKNGVGTYYANVNGSIETFDKEKNKFTHVAYVKPLNQFKLGTVTVSGTVTQGSNPNGEKPTVKIYEVTNDGKDLPQSVYLDASDKNKYKDVTNEMQSKLTVQENGNYTLNLDTLDKSYVIHYSGEYLNGTNEVNFRTQMFGYPEQRYGYYYNSYQLTWDNGLVLYSNKADGNGKNGQIIQNNDFEYKEDTLTETVTGQYDEKQIIETEENQDNTPLDIDYHTAIDGEGGYADGYIETIEETDSSAIDIDYHTAVDSEAGHVGGYTESSEESNPIDFEESTKGIVTGAVSDHTTVEDTKEYTTESNLIELVDELPEEHGQAQGPIEEITENNHHISHSGLGTENGHGNYGVIEEIEENSHVDIKSELGYEGGQNSGNQSFEEDTEEDKPKYEQGGNIVDIDFDSVPQIQGQNNGNQSFEEDTEKDKPKYEQGGNIIDIDFDSVPQIHGFNKHNEIIEEDTNKDKPNYQFGGHNSVDFEEDTLPKVSGQNEGQQTIEEDTTPPTPPTPEVPSEPETPTPPTPEVPSEPETPTPPTPEVPSEPETPTPPTPEVPSEPETPTPPTPEVPAEPGKPVPPAEEEPKKPSKPVEQGKVVTPVIEINEKVKAVAPTKQKQSKKSELPETGGEESTNKGMLFGGLFSILGLALLRRNKKNHKA</sequence>
<organism>
    <name type="scientific">Staphylococcus aureus (strain bovine RF122 / ET3-1)</name>
    <dbReference type="NCBI Taxonomy" id="273036"/>
    <lineage>
        <taxon>Bacteria</taxon>
        <taxon>Bacillati</taxon>
        <taxon>Bacillota</taxon>
        <taxon>Bacilli</taxon>
        <taxon>Bacillales</taxon>
        <taxon>Staphylococcaceae</taxon>
        <taxon>Staphylococcus</taxon>
    </lineage>
</organism>
<comment type="function">
    <text evidence="1">Promotes bacterial attachment to multiple substrates, such as fibronectin (Fn), fibrinogen (Fg), elastin peptides and tropoelastin. This confers to S.aureus the ability to invade endothelial cells. Promotes adherence to and aggregation of activated platelets (By similarity).</text>
</comment>
<comment type="subcellular location">
    <subcellularLocation>
        <location evidence="4">Secreted</location>
        <location evidence="4">Cell wall</location>
        <topology evidence="4">Peptidoglycan-anchor</topology>
    </subcellularLocation>
    <text evidence="2">Anchored to the cell wall by sortase A (By similarity).</text>
</comment>
<keyword id="KW-0130">Cell adhesion</keyword>
<keyword id="KW-0134">Cell wall</keyword>
<keyword id="KW-0572">Peptidoglycan-anchor</keyword>
<keyword id="KW-0677">Repeat</keyword>
<keyword id="KW-0964">Secreted</keyword>
<keyword id="KW-0732">Signal</keyword>
<keyword id="KW-0843">Virulence</keyword>